<protein>
    <recommendedName>
        <fullName evidence="1">Probable acid stress chaperone HdeA</fullName>
    </recommendedName>
</protein>
<proteinExistence type="inferred from homology"/>
<keyword id="KW-0143">Chaperone</keyword>
<keyword id="KW-1015">Disulfide bond</keyword>
<keyword id="KW-0574">Periplasm</keyword>
<keyword id="KW-0732">Signal</keyword>
<organism>
    <name type="scientific">Brucella suis (strain ATCC 23445 / NCTC 10510)</name>
    <dbReference type="NCBI Taxonomy" id="470137"/>
    <lineage>
        <taxon>Bacteria</taxon>
        <taxon>Pseudomonadati</taxon>
        <taxon>Pseudomonadota</taxon>
        <taxon>Alphaproteobacteria</taxon>
        <taxon>Hyphomicrobiales</taxon>
        <taxon>Brucellaceae</taxon>
        <taxon>Brucella/Ochrobactrum group</taxon>
        <taxon>Brucella</taxon>
    </lineage>
</organism>
<comment type="function">
    <text evidence="1">Required for optimal acid stress protection. Exhibits a chaperone-like activity only at low pH by suppressing non-specifically the aggregation of denaturated periplasmic proteins.</text>
</comment>
<comment type="subcellular location">
    <subcellularLocation>
        <location evidence="1">Periplasm</location>
    </subcellularLocation>
</comment>
<comment type="similarity">
    <text evidence="1">Belongs to the HdeA family.</text>
</comment>
<name>HDEA_BRUSI</name>
<gene>
    <name evidence="1" type="primary">hdeA</name>
    <name type="ordered locus">BSUIS_B0347</name>
</gene>
<accession>A9WY36</accession>
<evidence type="ECO:0000255" key="1">
    <source>
        <dbReference type="HAMAP-Rule" id="MF_00946"/>
    </source>
</evidence>
<dbReference type="EMBL" id="CP000912">
    <property type="protein sequence ID" value="ABY39352.1"/>
    <property type="molecule type" value="Genomic_DNA"/>
</dbReference>
<dbReference type="RefSeq" id="WP_002966248.1">
    <property type="nucleotide sequence ID" value="NC_010167.1"/>
</dbReference>
<dbReference type="SMR" id="A9WY36"/>
<dbReference type="GeneID" id="93015292"/>
<dbReference type="KEGG" id="bmt:BSUIS_B0347"/>
<dbReference type="HOGENOM" id="CLU_170142_0_0_5"/>
<dbReference type="Proteomes" id="UP000008545">
    <property type="component" value="Chromosome II"/>
</dbReference>
<dbReference type="GO" id="GO:0030288">
    <property type="term" value="C:outer membrane-bounded periplasmic space"/>
    <property type="evidence" value="ECO:0007669"/>
    <property type="project" value="InterPro"/>
</dbReference>
<dbReference type="GO" id="GO:1990451">
    <property type="term" value="P:cellular stress response to acidic pH"/>
    <property type="evidence" value="ECO:0007669"/>
    <property type="project" value="UniProtKB-UniRule"/>
</dbReference>
<dbReference type="Gene3D" id="1.10.890.10">
    <property type="entry name" value="HNS-dependent expression A"/>
    <property type="match status" value="1"/>
</dbReference>
<dbReference type="HAMAP" id="MF_00946">
    <property type="entry name" value="HdeA"/>
    <property type="match status" value="1"/>
</dbReference>
<dbReference type="InterPro" id="IPR024972">
    <property type="entry name" value="HdeA"/>
</dbReference>
<dbReference type="InterPro" id="IPR038303">
    <property type="entry name" value="HdeA/HdeB_sf"/>
</dbReference>
<dbReference type="InterPro" id="IPR036831">
    <property type="entry name" value="HdeA_sf"/>
</dbReference>
<dbReference type="InterPro" id="IPR010486">
    <property type="entry name" value="HNS-dep_expression_A/B"/>
</dbReference>
<dbReference type="NCBIfam" id="NF007576">
    <property type="entry name" value="PRK10208.1"/>
    <property type="match status" value="1"/>
</dbReference>
<dbReference type="Pfam" id="PF06411">
    <property type="entry name" value="HdeA"/>
    <property type="match status" value="1"/>
</dbReference>
<dbReference type="PIRSF" id="PIRSF009564">
    <property type="entry name" value="HNS-dep_expression_A"/>
    <property type="match status" value="1"/>
</dbReference>
<dbReference type="SUPFAM" id="SSF47752">
    <property type="entry name" value="Protein HNS-dependent expression A, HdeA"/>
    <property type="match status" value="1"/>
</dbReference>
<sequence>MIKALFNKNTALAAVAILALSGGAMAESAKTHKTDMAKKKVSELTCEDFNGLEESFKPTVVGWVVGFNKKGKEEDAVIDVDGIETVTPAIIEACKQEPKASFWKKAEAELKKVF</sequence>
<reference key="1">
    <citation type="submission" date="2007-12" db="EMBL/GenBank/DDBJ databases">
        <title>Brucella suis ATCC 23445 whole genome shotgun sequencing project.</title>
        <authorList>
            <person name="Setubal J.C."/>
            <person name="Bowns C."/>
            <person name="Boyle S."/>
            <person name="Crasta O.R."/>
            <person name="Czar M.J."/>
            <person name="Dharmanolla C."/>
            <person name="Gillespie J.J."/>
            <person name="Kenyon R.W."/>
            <person name="Lu J."/>
            <person name="Mane S."/>
            <person name="Mohapatra S."/>
            <person name="Nagrani S."/>
            <person name="Purkayastha A."/>
            <person name="Rajasimha H.K."/>
            <person name="Shallom J.M."/>
            <person name="Shallom S."/>
            <person name="Shukla M."/>
            <person name="Snyder E.E."/>
            <person name="Sobral B.W."/>
            <person name="Wattam A.R."/>
            <person name="Will R."/>
            <person name="Williams K."/>
            <person name="Yoo H."/>
            <person name="Bruce D."/>
            <person name="Detter C."/>
            <person name="Munk C."/>
            <person name="Brettin T.S."/>
        </authorList>
    </citation>
    <scope>NUCLEOTIDE SEQUENCE [LARGE SCALE GENOMIC DNA]</scope>
    <source>
        <strain>ATCC 23445 / NCTC 10510</strain>
    </source>
</reference>
<feature type="signal peptide" evidence="1">
    <location>
        <begin position="1"/>
        <end position="26"/>
    </location>
</feature>
<feature type="chain" id="PRO_0000338636" description="Probable acid stress chaperone HdeA">
    <location>
        <begin position="27"/>
        <end position="114"/>
    </location>
</feature>
<feature type="disulfide bond" evidence="1">
    <location>
        <begin position="46"/>
        <end position="94"/>
    </location>
</feature>